<keyword id="KW-0472">Membrane</keyword>
<keyword id="KW-1185">Reference proteome</keyword>
<keyword id="KW-0732">Signal</keyword>
<keyword id="KW-0812">Transmembrane</keyword>
<keyword id="KW-1133">Transmembrane helix</keyword>
<sequence>MLECLSALLVLFAGGGGSVLAAVQSKTVADPNLCPGYNSQLISPFLSSCKRNLSECVSRYFDEQYAFCRSCVTVNNETMEDLDNCKCLQCALSSLNNSCFHDYCTSKDEYDKLQIVVEQFQLTNGVLDDGEILKPRGNKFSSRKLSYFVGQNNTLFRNPLQFEKNQLISALLTSLTNNQKTISSVDMFEVVDANNEVQYLRERTISGKTLSPATGYEEENDGDCSVKDKKWEGKIEYHENKKVSSENCSKDTDDKSGSKKERNTKAPLFHTATEIHMTRWSSWRPKKIFTRYLVNEYQSPKIITTVNRFYRTKTDTETGTTLITSTKAKRRWFPRTKIVTSTATSTFLSITTTTTTNAIATKSLVAVLNPDGLNKKAGINFGLFSANGELASPDEGGTPTVVRRDKISDPGAANEQATLFSTTFSQVPHLPELDSGEFISAASQLDKRIFIFTAITVSITTLMMLGFSYRSRVSFRDHSIDDSDDDNDWSDDEVEFDEEYFYSLPVSIPEKGISLDKMAQQLGVE</sequence>
<reference key="1">
    <citation type="journal article" date="1992" name="Yeast">
        <title>DNA sequencing and analysis of a 24.7 kb segment encompassing centromere CEN11 of Saccharomyces cerevisiae reveals nine previously unknown open reading frames.</title>
        <authorList>
            <person name="Duesterhoeft A."/>
            <person name="Philippsen P."/>
        </authorList>
    </citation>
    <scope>NUCLEOTIDE SEQUENCE [GENOMIC DNA]</scope>
    <source>
        <strain>ATCC 204508 / S288c</strain>
    </source>
</reference>
<reference key="2">
    <citation type="journal article" date="1994" name="Nature">
        <title>Complete DNA sequence of yeast chromosome XI.</title>
        <authorList>
            <person name="Dujon B."/>
            <person name="Alexandraki D."/>
            <person name="Andre B."/>
            <person name="Ansorge W."/>
            <person name="Baladron V."/>
            <person name="Ballesta J.P.G."/>
            <person name="Banrevi A."/>
            <person name="Bolle P.-A."/>
            <person name="Bolotin-Fukuhara M."/>
            <person name="Bossier P."/>
            <person name="Bou G."/>
            <person name="Boyer J."/>
            <person name="Buitrago M.J."/>
            <person name="Cheret G."/>
            <person name="Colleaux L."/>
            <person name="Daignan-Fornier B."/>
            <person name="del Rey F."/>
            <person name="Dion C."/>
            <person name="Domdey H."/>
            <person name="Duesterhoeft A."/>
            <person name="Duesterhus S."/>
            <person name="Entian K.-D."/>
            <person name="Erfle H."/>
            <person name="Esteban P.F."/>
            <person name="Feldmann H."/>
            <person name="Fernandes L."/>
            <person name="Fobo G.M."/>
            <person name="Fritz C."/>
            <person name="Fukuhara H."/>
            <person name="Gabel C."/>
            <person name="Gaillon L."/>
            <person name="Garcia-Cantalejo J.M."/>
            <person name="Garcia-Ramirez J.J."/>
            <person name="Gent M.E."/>
            <person name="Ghazvini M."/>
            <person name="Goffeau A."/>
            <person name="Gonzalez A."/>
            <person name="Grothues D."/>
            <person name="Guerreiro P."/>
            <person name="Hegemann J.H."/>
            <person name="Hewitt N."/>
            <person name="Hilger F."/>
            <person name="Hollenberg C.P."/>
            <person name="Horaitis O."/>
            <person name="Indge K.J."/>
            <person name="Jacquier A."/>
            <person name="James C.M."/>
            <person name="Jauniaux J.-C."/>
            <person name="Jimenez A."/>
            <person name="Keuchel H."/>
            <person name="Kirchrath L."/>
            <person name="Kleine K."/>
            <person name="Koetter P."/>
            <person name="Legrain P."/>
            <person name="Liebl S."/>
            <person name="Louis E.J."/>
            <person name="Maia e Silva A."/>
            <person name="Marck C."/>
            <person name="Monnier A.-L."/>
            <person name="Moestl D."/>
            <person name="Mueller S."/>
            <person name="Obermaier B."/>
            <person name="Oliver S.G."/>
            <person name="Pallier C."/>
            <person name="Pascolo S."/>
            <person name="Pfeiffer F."/>
            <person name="Philippsen P."/>
            <person name="Planta R.J."/>
            <person name="Pohl F.M."/>
            <person name="Pohl T.M."/>
            <person name="Poehlmann R."/>
            <person name="Portetelle D."/>
            <person name="Purnelle B."/>
            <person name="Puzos V."/>
            <person name="Ramezani Rad M."/>
            <person name="Rasmussen S.W."/>
            <person name="Remacha M.A."/>
            <person name="Revuelta J.L."/>
            <person name="Richard G.-F."/>
            <person name="Rieger M."/>
            <person name="Rodrigues-Pousada C."/>
            <person name="Rose M."/>
            <person name="Rupp T."/>
            <person name="Santos M.A."/>
            <person name="Schwager C."/>
            <person name="Sensen C."/>
            <person name="Skala J."/>
            <person name="Soares H."/>
            <person name="Sor F."/>
            <person name="Stegemann J."/>
            <person name="Tettelin H."/>
            <person name="Thierry A."/>
            <person name="Tzermia M."/>
            <person name="Urrestarazu L.A."/>
            <person name="van Dyck L."/>
            <person name="van Vliet-Reedijk J.C."/>
            <person name="Valens M."/>
            <person name="Vandenbol M."/>
            <person name="Vilela C."/>
            <person name="Vissers S."/>
            <person name="von Wettstein D."/>
            <person name="Voss H."/>
            <person name="Wiemann S."/>
            <person name="Xu G."/>
            <person name="Zimmermann J."/>
            <person name="Haasemann M."/>
            <person name="Becker I."/>
            <person name="Mewes H.-W."/>
        </authorList>
    </citation>
    <scope>NUCLEOTIDE SEQUENCE [LARGE SCALE GENOMIC DNA]</scope>
    <source>
        <strain>ATCC 204508 / S288c</strain>
    </source>
</reference>
<reference key="3">
    <citation type="journal article" date="2014" name="G3 (Bethesda)">
        <title>The reference genome sequence of Saccharomyces cerevisiae: Then and now.</title>
        <authorList>
            <person name="Engel S.R."/>
            <person name="Dietrich F.S."/>
            <person name="Fisk D.G."/>
            <person name="Binkley G."/>
            <person name="Balakrishnan R."/>
            <person name="Costanzo M.C."/>
            <person name="Dwight S.S."/>
            <person name="Hitz B.C."/>
            <person name="Karra K."/>
            <person name="Nash R.S."/>
            <person name="Weng S."/>
            <person name="Wong E.D."/>
            <person name="Lloyd P."/>
            <person name="Skrzypek M.S."/>
            <person name="Miyasato S.R."/>
            <person name="Simison M."/>
            <person name="Cherry J.M."/>
        </authorList>
    </citation>
    <scope>GENOME REANNOTATION</scope>
    <source>
        <strain>ATCC 204508 / S288c</strain>
    </source>
</reference>
<reference key="4">
    <citation type="journal article" date="2007" name="Genome Res.">
        <title>Approaching a complete repository of sequence-verified protein-encoding clones for Saccharomyces cerevisiae.</title>
        <authorList>
            <person name="Hu Y."/>
            <person name="Rolfs A."/>
            <person name="Bhullar B."/>
            <person name="Murthy T.V.S."/>
            <person name="Zhu C."/>
            <person name="Berger M.F."/>
            <person name="Camargo A.A."/>
            <person name="Kelley F."/>
            <person name="McCarron S."/>
            <person name="Jepson D."/>
            <person name="Richardson A."/>
            <person name="Raphael J."/>
            <person name="Moreira D."/>
            <person name="Taycher E."/>
            <person name="Zuo D."/>
            <person name="Mohr S."/>
            <person name="Kane M.F."/>
            <person name="Williamson J."/>
            <person name="Simpson A.J.G."/>
            <person name="Bulyk M.L."/>
            <person name="Harlow E."/>
            <person name="Marsischky G."/>
            <person name="Kolodner R.D."/>
            <person name="LaBaer J."/>
        </authorList>
    </citation>
    <scope>NUCLEOTIDE SEQUENCE [GENOMIC DNA] OF 79-525</scope>
    <source>
        <strain>ATCC 204508 / S288c</strain>
    </source>
</reference>
<reference key="5">
    <citation type="journal article" date="2006" name="Proc. Natl. Acad. Sci. U.S.A.">
        <title>A large-scale full-length cDNA analysis to explore the budding yeast transcriptome.</title>
        <authorList>
            <person name="Miura F."/>
            <person name="Kawaguchi N."/>
            <person name="Sese J."/>
            <person name="Toyoda A."/>
            <person name="Hattori M."/>
            <person name="Morishita S."/>
            <person name="Ito T."/>
        </authorList>
    </citation>
    <scope>IDENTIFICATION OF INTRON</scope>
</reference>
<dbReference type="EMBL" id="X65124">
    <property type="protein sequence ID" value="CAA46247.1"/>
    <property type="status" value="ALT_SEQ"/>
    <property type="molecule type" value="Genomic_DNA"/>
</dbReference>
<dbReference type="EMBL" id="Z28230">
    <property type="protein sequence ID" value="CAA82075.1"/>
    <property type="status" value="ALT_SEQ"/>
    <property type="molecule type" value="Genomic_DNA"/>
</dbReference>
<dbReference type="EMBL" id="AY558315">
    <property type="protein sequence ID" value="AAS56641.1"/>
    <property type="molecule type" value="Genomic_DNA"/>
</dbReference>
<dbReference type="EMBL" id="BK006944">
    <property type="protein sequence ID" value="DAA09161.1"/>
    <property type="molecule type" value="Genomic_DNA"/>
</dbReference>
<dbReference type="PIR" id="S25817">
    <property type="entry name" value="S25817"/>
</dbReference>
<dbReference type="RefSeq" id="NP_012930.2">
    <property type="nucleotide sequence ID" value="NM_001179795.1"/>
</dbReference>
<dbReference type="BioGRID" id="34137">
    <property type="interactions" value="95"/>
</dbReference>
<dbReference type="DIP" id="DIP-4606N"/>
<dbReference type="FunCoup" id="Q02203">
    <property type="interactions" value="21"/>
</dbReference>
<dbReference type="STRING" id="4932.YKR005C"/>
<dbReference type="GlyGen" id="Q02203">
    <property type="glycosylation" value="1 site"/>
</dbReference>
<dbReference type="PaxDb" id="4932-YKR005C"/>
<dbReference type="PeptideAtlas" id="Q02203"/>
<dbReference type="EnsemblFungi" id="YKR005C_mRNA">
    <property type="protein sequence ID" value="YKR005C"/>
    <property type="gene ID" value="YKR005C"/>
</dbReference>
<dbReference type="GeneID" id="853874"/>
<dbReference type="KEGG" id="sce:YKR005C"/>
<dbReference type="AGR" id="SGD:S000001713"/>
<dbReference type="SGD" id="S000001713">
    <property type="gene designation" value="YKR005C"/>
</dbReference>
<dbReference type="VEuPathDB" id="FungiDB:YKR005C"/>
<dbReference type="eggNOG" id="ENOG502S2FV">
    <property type="taxonomic scope" value="Eukaryota"/>
</dbReference>
<dbReference type="HOGENOM" id="CLU_518965_0_0_1"/>
<dbReference type="InParanoid" id="Q02203"/>
<dbReference type="OMA" id="SITTLMM"/>
<dbReference type="OrthoDB" id="4053155at2759"/>
<dbReference type="BioCyc" id="YEAST:G3O-31983-MONOMER"/>
<dbReference type="BioGRID-ORCS" id="853874">
    <property type="hits" value="0 hits in 10 CRISPR screens"/>
</dbReference>
<dbReference type="PRO" id="PR:Q02203"/>
<dbReference type="Proteomes" id="UP000002311">
    <property type="component" value="Chromosome XI"/>
</dbReference>
<dbReference type="RNAct" id="Q02203">
    <property type="molecule type" value="protein"/>
</dbReference>
<dbReference type="GO" id="GO:0016020">
    <property type="term" value="C:membrane"/>
    <property type="evidence" value="ECO:0007669"/>
    <property type="project" value="UniProtKB-SubCell"/>
</dbReference>
<dbReference type="GO" id="GO:0005739">
    <property type="term" value="C:mitochondrion"/>
    <property type="evidence" value="ECO:0007005"/>
    <property type="project" value="SGD"/>
</dbReference>
<evidence type="ECO:0000255" key="1"/>
<evidence type="ECO:0000256" key="2">
    <source>
        <dbReference type="SAM" id="MobiDB-lite"/>
    </source>
</evidence>
<evidence type="ECO:0000305" key="3"/>
<comment type="subcellular location">
    <subcellularLocation>
        <location evidence="3">Membrane</location>
        <topology evidence="3">Single-pass type I membrane protein</topology>
    </subcellularLocation>
</comment>
<comment type="sequence caution" evidence="3">
    <conflict type="erroneous gene model prediction">
        <sequence resource="EMBL-CDS" id="CAA46247"/>
    </conflict>
</comment>
<comment type="sequence caution" evidence="3">
    <conflict type="erroneous gene model prediction">
        <sequence resource="EMBL-CDS" id="CAA82075"/>
    </conflict>
</comment>
<proteinExistence type="inferred from homology"/>
<name>YKY5_YEAST</name>
<feature type="signal peptide" evidence="1">
    <location>
        <begin position="1"/>
        <end position="21"/>
    </location>
</feature>
<feature type="chain" id="PRO_0000203192" description="Uncharacterized protein YKR005C">
    <location>
        <begin position="22"/>
        <end position="525"/>
    </location>
</feature>
<feature type="topological domain" description="Extracellular" evidence="1">
    <location>
        <begin position="22"/>
        <end position="448"/>
    </location>
</feature>
<feature type="transmembrane region" description="Helical" evidence="1">
    <location>
        <begin position="449"/>
        <end position="469"/>
    </location>
</feature>
<feature type="topological domain" description="Cytoplasmic" evidence="1">
    <location>
        <begin position="470"/>
        <end position="525"/>
    </location>
</feature>
<feature type="region of interest" description="Disordered" evidence="2">
    <location>
        <begin position="242"/>
        <end position="264"/>
    </location>
</feature>
<accession>Q02203</accession>
<accession>D6VXU1</accession>
<organism>
    <name type="scientific">Saccharomyces cerevisiae (strain ATCC 204508 / S288c)</name>
    <name type="common">Baker's yeast</name>
    <dbReference type="NCBI Taxonomy" id="559292"/>
    <lineage>
        <taxon>Eukaryota</taxon>
        <taxon>Fungi</taxon>
        <taxon>Dikarya</taxon>
        <taxon>Ascomycota</taxon>
        <taxon>Saccharomycotina</taxon>
        <taxon>Saccharomycetes</taxon>
        <taxon>Saccharomycetales</taxon>
        <taxon>Saccharomycetaceae</taxon>
        <taxon>Saccharomyces</taxon>
    </lineage>
</organism>
<gene>
    <name type="ordered locus">YKR005C</name>
    <name type="ORF">YK104</name>
</gene>
<protein>
    <recommendedName>
        <fullName>Uncharacterized protein YKR005C</fullName>
    </recommendedName>
</protein>